<keyword id="KW-0687">Ribonucleoprotein</keyword>
<keyword id="KW-0689">Ribosomal protein</keyword>
<keyword id="KW-0694">RNA-binding</keyword>
<keyword id="KW-0699">rRNA-binding</keyword>
<gene>
    <name evidence="1" type="primary">rpsC</name>
    <name evidence="1" type="synonym">rps3</name>
    <name type="ordered locus">PMM1552</name>
</gene>
<proteinExistence type="inferred from homology"/>
<dbReference type="EMBL" id="BX548174">
    <property type="protein sequence ID" value="CAE20011.1"/>
    <property type="molecule type" value="Genomic_DNA"/>
</dbReference>
<dbReference type="RefSeq" id="WP_011133180.1">
    <property type="nucleotide sequence ID" value="NC_005072.1"/>
</dbReference>
<dbReference type="SMR" id="Q7UZV2"/>
<dbReference type="STRING" id="59919.PMM1552"/>
<dbReference type="KEGG" id="pmm:PMM1552"/>
<dbReference type="eggNOG" id="COG0092">
    <property type="taxonomic scope" value="Bacteria"/>
</dbReference>
<dbReference type="HOGENOM" id="CLU_058591_0_2_3"/>
<dbReference type="OrthoDB" id="9806396at2"/>
<dbReference type="Proteomes" id="UP000001026">
    <property type="component" value="Chromosome"/>
</dbReference>
<dbReference type="GO" id="GO:0022627">
    <property type="term" value="C:cytosolic small ribosomal subunit"/>
    <property type="evidence" value="ECO:0007669"/>
    <property type="project" value="TreeGrafter"/>
</dbReference>
<dbReference type="GO" id="GO:0003729">
    <property type="term" value="F:mRNA binding"/>
    <property type="evidence" value="ECO:0007669"/>
    <property type="project" value="UniProtKB-UniRule"/>
</dbReference>
<dbReference type="GO" id="GO:0019843">
    <property type="term" value="F:rRNA binding"/>
    <property type="evidence" value="ECO:0007669"/>
    <property type="project" value="UniProtKB-UniRule"/>
</dbReference>
<dbReference type="GO" id="GO:0003735">
    <property type="term" value="F:structural constituent of ribosome"/>
    <property type="evidence" value="ECO:0007669"/>
    <property type="project" value="InterPro"/>
</dbReference>
<dbReference type="GO" id="GO:0006412">
    <property type="term" value="P:translation"/>
    <property type="evidence" value="ECO:0007669"/>
    <property type="project" value="UniProtKB-UniRule"/>
</dbReference>
<dbReference type="CDD" id="cd02412">
    <property type="entry name" value="KH-II_30S_S3"/>
    <property type="match status" value="1"/>
</dbReference>
<dbReference type="FunFam" id="3.30.300.20:FF:000001">
    <property type="entry name" value="30S ribosomal protein S3"/>
    <property type="match status" value="1"/>
</dbReference>
<dbReference type="Gene3D" id="3.30.300.20">
    <property type="match status" value="1"/>
</dbReference>
<dbReference type="Gene3D" id="3.30.1140.32">
    <property type="entry name" value="Ribosomal protein S3, C-terminal domain"/>
    <property type="match status" value="1"/>
</dbReference>
<dbReference type="HAMAP" id="MF_01309_B">
    <property type="entry name" value="Ribosomal_uS3_B"/>
    <property type="match status" value="1"/>
</dbReference>
<dbReference type="InterPro" id="IPR004087">
    <property type="entry name" value="KH_dom"/>
</dbReference>
<dbReference type="InterPro" id="IPR015946">
    <property type="entry name" value="KH_dom-like_a/b"/>
</dbReference>
<dbReference type="InterPro" id="IPR004044">
    <property type="entry name" value="KH_dom_type_2"/>
</dbReference>
<dbReference type="InterPro" id="IPR009019">
    <property type="entry name" value="KH_sf_prok-type"/>
</dbReference>
<dbReference type="InterPro" id="IPR036419">
    <property type="entry name" value="Ribosomal_S3_C_sf"/>
</dbReference>
<dbReference type="InterPro" id="IPR005704">
    <property type="entry name" value="Ribosomal_uS3_bac-typ"/>
</dbReference>
<dbReference type="InterPro" id="IPR001351">
    <property type="entry name" value="Ribosomal_uS3_C"/>
</dbReference>
<dbReference type="InterPro" id="IPR018280">
    <property type="entry name" value="Ribosomal_uS3_CS"/>
</dbReference>
<dbReference type="NCBIfam" id="TIGR01009">
    <property type="entry name" value="rpsC_bact"/>
    <property type="match status" value="1"/>
</dbReference>
<dbReference type="PANTHER" id="PTHR11760">
    <property type="entry name" value="30S/40S RIBOSOMAL PROTEIN S3"/>
    <property type="match status" value="1"/>
</dbReference>
<dbReference type="PANTHER" id="PTHR11760:SF19">
    <property type="entry name" value="SMALL RIBOSOMAL SUBUNIT PROTEIN US3C"/>
    <property type="match status" value="1"/>
</dbReference>
<dbReference type="Pfam" id="PF07650">
    <property type="entry name" value="KH_2"/>
    <property type="match status" value="1"/>
</dbReference>
<dbReference type="Pfam" id="PF00189">
    <property type="entry name" value="Ribosomal_S3_C"/>
    <property type="match status" value="1"/>
</dbReference>
<dbReference type="SMART" id="SM00322">
    <property type="entry name" value="KH"/>
    <property type="match status" value="1"/>
</dbReference>
<dbReference type="SUPFAM" id="SSF54814">
    <property type="entry name" value="Prokaryotic type KH domain (KH-domain type II)"/>
    <property type="match status" value="1"/>
</dbReference>
<dbReference type="SUPFAM" id="SSF54821">
    <property type="entry name" value="Ribosomal protein S3 C-terminal domain"/>
    <property type="match status" value="1"/>
</dbReference>
<dbReference type="PROSITE" id="PS50823">
    <property type="entry name" value="KH_TYPE_2"/>
    <property type="match status" value="1"/>
</dbReference>
<dbReference type="PROSITE" id="PS00548">
    <property type="entry name" value="RIBOSOMAL_S3"/>
    <property type="match status" value="1"/>
</dbReference>
<comment type="function">
    <text evidence="1">Binds the lower part of the 30S subunit head. Binds mRNA in the 70S ribosome, positioning it for translation.</text>
</comment>
<comment type="subunit">
    <text evidence="1">Part of the 30S ribosomal subunit. Forms a tight complex with proteins S10 and S14.</text>
</comment>
<comment type="similarity">
    <text evidence="1">Belongs to the universal ribosomal protein uS3 family.</text>
</comment>
<evidence type="ECO:0000255" key="1">
    <source>
        <dbReference type="HAMAP-Rule" id="MF_01309"/>
    </source>
</evidence>
<evidence type="ECO:0000256" key="2">
    <source>
        <dbReference type="SAM" id="MobiDB-lite"/>
    </source>
</evidence>
<evidence type="ECO:0000305" key="3"/>
<organism>
    <name type="scientific">Prochlorococcus marinus subsp. pastoris (strain CCMP1986 / NIES-2087 / MED4)</name>
    <dbReference type="NCBI Taxonomy" id="59919"/>
    <lineage>
        <taxon>Bacteria</taxon>
        <taxon>Bacillati</taxon>
        <taxon>Cyanobacteriota</taxon>
        <taxon>Cyanophyceae</taxon>
        <taxon>Synechococcales</taxon>
        <taxon>Prochlorococcaceae</taxon>
        <taxon>Prochlorococcus</taxon>
    </lineage>
</organism>
<reference key="1">
    <citation type="journal article" date="2003" name="Nature">
        <title>Genome divergence in two Prochlorococcus ecotypes reflects oceanic niche differentiation.</title>
        <authorList>
            <person name="Rocap G."/>
            <person name="Larimer F.W."/>
            <person name="Lamerdin J.E."/>
            <person name="Malfatti S."/>
            <person name="Chain P."/>
            <person name="Ahlgren N.A."/>
            <person name="Arellano A."/>
            <person name="Coleman M."/>
            <person name="Hauser L."/>
            <person name="Hess W.R."/>
            <person name="Johnson Z.I."/>
            <person name="Land M.L."/>
            <person name="Lindell D."/>
            <person name="Post A.F."/>
            <person name="Regala W."/>
            <person name="Shah M."/>
            <person name="Shaw S.L."/>
            <person name="Steglich C."/>
            <person name="Sullivan M.B."/>
            <person name="Ting C.S."/>
            <person name="Tolonen A."/>
            <person name="Webb E.A."/>
            <person name="Zinser E.R."/>
            <person name="Chisholm S.W."/>
        </authorList>
    </citation>
    <scope>NUCLEOTIDE SEQUENCE [LARGE SCALE GENOMIC DNA]</scope>
    <source>
        <strain>CCMP1986 / NIES-2087 / MED4</strain>
    </source>
</reference>
<protein>
    <recommendedName>
        <fullName evidence="1">Small ribosomal subunit protein uS3</fullName>
    </recommendedName>
    <alternativeName>
        <fullName evidence="3">30S ribosomal protein S3</fullName>
    </alternativeName>
</protein>
<sequence length="243" mass="27466">MGNKINPTGFRLGITQEHRSKWFATSKTYPTLLQEDDKIRTFIQKKYSSAGISDVLIARKADQLELELKTARPGVIVGRQGSGIEELRSGIQKTIGDRTRQVRINVVEVERVDADAYLLAEYIAQQLEKRVAFRRTIRMALQRAQRAGVLGLKVQVGGRLNGAEIARTEWTREGRVPLHTLRAEVDYALREANTTYGVLGIKVWVFKGEVLPKEEQTIPVGAIPRRKGSRKPQQFEDRSNENS</sequence>
<feature type="chain" id="PRO_0000130177" description="Small ribosomal subunit protein uS3">
    <location>
        <begin position="1"/>
        <end position="243"/>
    </location>
</feature>
<feature type="domain" description="KH type-2" evidence="1">
    <location>
        <begin position="39"/>
        <end position="110"/>
    </location>
</feature>
<feature type="region of interest" description="Disordered" evidence="2">
    <location>
        <begin position="221"/>
        <end position="243"/>
    </location>
</feature>
<feature type="compositionally biased region" description="Basic and acidic residues" evidence="2">
    <location>
        <begin position="233"/>
        <end position="243"/>
    </location>
</feature>
<name>RS3_PROMP</name>
<accession>Q7UZV2</accession>